<protein>
    <recommendedName>
        <fullName evidence="1">Orotate phosphoribosyltransferase</fullName>
        <shortName evidence="1">OPRT</shortName>
        <shortName evidence="1">OPRTase</shortName>
        <ecNumber evidence="1">2.4.2.10</ecNumber>
    </recommendedName>
</protein>
<dbReference type="EC" id="2.4.2.10" evidence="1"/>
<dbReference type="EMBL" id="CP000628">
    <property type="protein sequence ID" value="ACM25364.1"/>
    <property type="molecule type" value="Genomic_DNA"/>
</dbReference>
<dbReference type="RefSeq" id="WP_007695520.1">
    <property type="nucleotide sequence ID" value="NC_011985.1"/>
</dbReference>
<dbReference type="SMR" id="B9J8H7"/>
<dbReference type="STRING" id="311403.Arad_0742"/>
<dbReference type="KEGG" id="ara:Arad_0742"/>
<dbReference type="eggNOG" id="COG0461">
    <property type="taxonomic scope" value="Bacteria"/>
</dbReference>
<dbReference type="HOGENOM" id="CLU_074878_1_0_5"/>
<dbReference type="UniPathway" id="UPA00070">
    <property type="reaction ID" value="UER00119"/>
</dbReference>
<dbReference type="Proteomes" id="UP000001600">
    <property type="component" value="Chromosome 1"/>
</dbReference>
<dbReference type="GO" id="GO:0000287">
    <property type="term" value="F:magnesium ion binding"/>
    <property type="evidence" value="ECO:0007669"/>
    <property type="project" value="UniProtKB-UniRule"/>
</dbReference>
<dbReference type="GO" id="GO:0004588">
    <property type="term" value="F:orotate phosphoribosyltransferase activity"/>
    <property type="evidence" value="ECO:0007669"/>
    <property type="project" value="UniProtKB-UniRule"/>
</dbReference>
<dbReference type="GO" id="GO:0044205">
    <property type="term" value="P:'de novo' UMP biosynthetic process"/>
    <property type="evidence" value="ECO:0007669"/>
    <property type="project" value="UniProtKB-UniRule"/>
</dbReference>
<dbReference type="GO" id="GO:0019856">
    <property type="term" value="P:pyrimidine nucleobase biosynthetic process"/>
    <property type="evidence" value="ECO:0007669"/>
    <property type="project" value="TreeGrafter"/>
</dbReference>
<dbReference type="CDD" id="cd06223">
    <property type="entry name" value="PRTases_typeI"/>
    <property type="match status" value="1"/>
</dbReference>
<dbReference type="Gene3D" id="3.40.50.2020">
    <property type="match status" value="1"/>
</dbReference>
<dbReference type="HAMAP" id="MF_01208">
    <property type="entry name" value="PyrE"/>
    <property type="match status" value="1"/>
</dbReference>
<dbReference type="InterPro" id="IPR023031">
    <property type="entry name" value="OPRT"/>
</dbReference>
<dbReference type="InterPro" id="IPR004467">
    <property type="entry name" value="Or_phspho_trans_dom"/>
</dbReference>
<dbReference type="InterPro" id="IPR000836">
    <property type="entry name" value="PRibTrfase_dom"/>
</dbReference>
<dbReference type="InterPro" id="IPR029057">
    <property type="entry name" value="PRTase-like"/>
</dbReference>
<dbReference type="NCBIfam" id="NF001729">
    <property type="entry name" value="PRK00455.1-3"/>
    <property type="match status" value="1"/>
</dbReference>
<dbReference type="NCBIfam" id="TIGR00336">
    <property type="entry name" value="pyrE"/>
    <property type="match status" value="1"/>
</dbReference>
<dbReference type="PANTHER" id="PTHR19278">
    <property type="entry name" value="OROTATE PHOSPHORIBOSYLTRANSFERASE"/>
    <property type="match status" value="1"/>
</dbReference>
<dbReference type="PANTHER" id="PTHR19278:SF9">
    <property type="entry name" value="URIDINE 5'-MONOPHOSPHATE SYNTHASE"/>
    <property type="match status" value="1"/>
</dbReference>
<dbReference type="Pfam" id="PF00156">
    <property type="entry name" value="Pribosyltran"/>
    <property type="match status" value="1"/>
</dbReference>
<dbReference type="SUPFAM" id="SSF53271">
    <property type="entry name" value="PRTase-like"/>
    <property type="match status" value="1"/>
</dbReference>
<name>PYRE_RHIR8</name>
<feature type="chain" id="PRO_1000164666" description="Orotate phosphoribosyltransferase">
    <location>
        <begin position="1"/>
        <end position="232"/>
    </location>
</feature>
<feature type="binding site" evidence="1">
    <location>
        <position position="107"/>
    </location>
    <ligand>
        <name>5-phospho-alpha-D-ribose 1-diphosphate</name>
        <dbReference type="ChEBI" id="CHEBI:58017"/>
        <note>ligand shared between dimeric partners</note>
    </ligand>
</feature>
<feature type="binding site" description="in other chain" evidence="1">
    <location>
        <position position="108"/>
    </location>
    <ligand>
        <name>5-phospho-alpha-D-ribose 1-diphosphate</name>
        <dbReference type="ChEBI" id="CHEBI:58017"/>
        <note>ligand shared between dimeric partners</note>
    </ligand>
</feature>
<feature type="binding site" evidence="1">
    <location>
        <position position="111"/>
    </location>
    <ligand>
        <name>5-phospho-alpha-D-ribose 1-diphosphate</name>
        <dbReference type="ChEBI" id="CHEBI:58017"/>
        <note>ligand shared between dimeric partners</note>
    </ligand>
</feature>
<feature type="binding site" evidence="1">
    <location>
        <position position="113"/>
    </location>
    <ligand>
        <name>5-phospho-alpha-D-ribose 1-diphosphate</name>
        <dbReference type="ChEBI" id="CHEBI:58017"/>
        <note>ligand shared between dimeric partners</note>
    </ligand>
</feature>
<feature type="binding site" description="in other chain" evidence="1">
    <location>
        <begin position="133"/>
        <end position="141"/>
    </location>
    <ligand>
        <name>5-phospho-alpha-D-ribose 1-diphosphate</name>
        <dbReference type="ChEBI" id="CHEBI:58017"/>
        <note>ligand shared between dimeric partners</note>
    </ligand>
</feature>
<feature type="binding site" evidence="1">
    <location>
        <position position="137"/>
    </location>
    <ligand>
        <name>orotate</name>
        <dbReference type="ChEBI" id="CHEBI:30839"/>
    </ligand>
</feature>
<comment type="function">
    <text evidence="1">Catalyzes the transfer of a ribosyl phosphate group from 5-phosphoribose 1-diphosphate to orotate, leading to the formation of orotidine monophosphate (OMP).</text>
</comment>
<comment type="catalytic activity">
    <reaction evidence="1">
        <text>orotidine 5'-phosphate + diphosphate = orotate + 5-phospho-alpha-D-ribose 1-diphosphate</text>
        <dbReference type="Rhea" id="RHEA:10380"/>
        <dbReference type="ChEBI" id="CHEBI:30839"/>
        <dbReference type="ChEBI" id="CHEBI:33019"/>
        <dbReference type="ChEBI" id="CHEBI:57538"/>
        <dbReference type="ChEBI" id="CHEBI:58017"/>
        <dbReference type="EC" id="2.4.2.10"/>
    </reaction>
</comment>
<comment type="cofactor">
    <cofactor evidence="1">
        <name>Mg(2+)</name>
        <dbReference type="ChEBI" id="CHEBI:18420"/>
    </cofactor>
</comment>
<comment type="pathway">
    <text evidence="1">Pyrimidine metabolism; UMP biosynthesis via de novo pathway; UMP from orotate: step 1/2.</text>
</comment>
<comment type="subunit">
    <text evidence="1">Homodimer.</text>
</comment>
<comment type="similarity">
    <text evidence="1">Belongs to the purine/pyrimidine phosphoribosyltransferase family. PyrE subfamily.</text>
</comment>
<reference key="1">
    <citation type="journal article" date="2009" name="J. Bacteriol.">
        <title>Genome sequences of three Agrobacterium biovars help elucidate the evolution of multichromosome genomes in bacteria.</title>
        <authorList>
            <person name="Slater S.C."/>
            <person name="Goldman B.S."/>
            <person name="Goodner B."/>
            <person name="Setubal J.C."/>
            <person name="Farrand S.K."/>
            <person name="Nester E.W."/>
            <person name="Burr T.J."/>
            <person name="Banta L."/>
            <person name="Dickerman A.W."/>
            <person name="Paulsen I."/>
            <person name="Otten L."/>
            <person name="Suen G."/>
            <person name="Welch R."/>
            <person name="Almeida N.F."/>
            <person name="Arnold F."/>
            <person name="Burton O.T."/>
            <person name="Du Z."/>
            <person name="Ewing A."/>
            <person name="Godsy E."/>
            <person name="Heisel S."/>
            <person name="Houmiel K.L."/>
            <person name="Jhaveri J."/>
            <person name="Lu J."/>
            <person name="Miller N.M."/>
            <person name="Norton S."/>
            <person name="Chen Q."/>
            <person name="Phoolcharoen W."/>
            <person name="Ohlin V."/>
            <person name="Ondrusek D."/>
            <person name="Pride N."/>
            <person name="Stricklin S.L."/>
            <person name="Sun J."/>
            <person name="Wheeler C."/>
            <person name="Wilson L."/>
            <person name="Zhu H."/>
            <person name="Wood D.W."/>
        </authorList>
    </citation>
    <scope>NUCLEOTIDE SEQUENCE [LARGE SCALE GENOMIC DNA]</scope>
    <source>
        <strain>K84 / ATCC BAA-868</strain>
    </source>
</reference>
<accession>B9J8H7</accession>
<keyword id="KW-0328">Glycosyltransferase</keyword>
<keyword id="KW-0460">Magnesium</keyword>
<keyword id="KW-0665">Pyrimidine biosynthesis</keyword>
<keyword id="KW-0808">Transferase</keyword>
<sequence length="232" mass="25536">MTQMTFSDRAVMAELVAKMLWEIKAVHFSADKPYKLASGMASPVYIDCRKLISYPRVRSTVMDFAASLIMRDAGFEQFDCVAGGETAGIPFAAFLAERLNLPMIYVRKQPKGHGRNSQIEGHMPDGARVLVIEDLTTAGGSMFTFIDAIRAAGGIVDHGMALFYYGIFPEAEARFANGKVRLHHIATWRNVLAVAKEQKLFDDKTLEEVEAFLNAPLAWSGRNGGVAELATK</sequence>
<gene>
    <name evidence="1" type="primary">pyrE</name>
    <name type="ordered locus">Arad_0742</name>
</gene>
<evidence type="ECO:0000255" key="1">
    <source>
        <dbReference type="HAMAP-Rule" id="MF_01208"/>
    </source>
</evidence>
<organism>
    <name type="scientific">Rhizobium rhizogenes (strain K84 / ATCC BAA-868)</name>
    <name type="common">Agrobacterium radiobacter</name>
    <dbReference type="NCBI Taxonomy" id="311403"/>
    <lineage>
        <taxon>Bacteria</taxon>
        <taxon>Pseudomonadati</taxon>
        <taxon>Pseudomonadota</taxon>
        <taxon>Alphaproteobacteria</taxon>
        <taxon>Hyphomicrobiales</taxon>
        <taxon>Rhizobiaceae</taxon>
        <taxon>Rhizobium/Agrobacterium group</taxon>
        <taxon>Rhizobium</taxon>
    </lineage>
</organism>
<proteinExistence type="inferred from homology"/>